<dbReference type="EC" id="2.7.1.130" evidence="1"/>
<dbReference type="EMBL" id="AE016825">
    <property type="protein sequence ID" value="AAQ61010.1"/>
    <property type="molecule type" value="Genomic_DNA"/>
</dbReference>
<dbReference type="RefSeq" id="WP_011136893.1">
    <property type="nucleotide sequence ID" value="NC_005085.1"/>
</dbReference>
<dbReference type="SMR" id="Q7NSS4"/>
<dbReference type="STRING" id="243365.CV_3346"/>
<dbReference type="KEGG" id="cvi:CV_3346"/>
<dbReference type="eggNOG" id="COG1663">
    <property type="taxonomic scope" value="Bacteria"/>
</dbReference>
<dbReference type="HOGENOM" id="CLU_038816_2_0_4"/>
<dbReference type="OrthoDB" id="9766423at2"/>
<dbReference type="UniPathway" id="UPA00359">
    <property type="reaction ID" value="UER00482"/>
</dbReference>
<dbReference type="Proteomes" id="UP000001424">
    <property type="component" value="Chromosome"/>
</dbReference>
<dbReference type="GO" id="GO:0005886">
    <property type="term" value="C:plasma membrane"/>
    <property type="evidence" value="ECO:0007669"/>
    <property type="project" value="TreeGrafter"/>
</dbReference>
<dbReference type="GO" id="GO:0005524">
    <property type="term" value="F:ATP binding"/>
    <property type="evidence" value="ECO:0007669"/>
    <property type="project" value="UniProtKB-UniRule"/>
</dbReference>
<dbReference type="GO" id="GO:0009029">
    <property type="term" value="F:tetraacyldisaccharide 4'-kinase activity"/>
    <property type="evidence" value="ECO:0007669"/>
    <property type="project" value="UniProtKB-UniRule"/>
</dbReference>
<dbReference type="GO" id="GO:0009245">
    <property type="term" value="P:lipid A biosynthetic process"/>
    <property type="evidence" value="ECO:0007669"/>
    <property type="project" value="UniProtKB-UniRule"/>
</dbReference>
<dbReference type="GO" id="GO:0009244">
    <property type="term" value="P:lipopolysaccharide core region biosynthetic process"/>
    <property type="evidence" value="ECO:0007669"/>
    <property type="project" value="TreeGrafter"/>
</dbReference>
<dbReference type="HAMAP" id="MF_00409">
    <property type="entry name" value="LpxK"/>
    <property type="match status" value="1"/>
</dbReference>
<dbReference type="InterPro" id="IPR003758">
    <property type="entry name" value="LpxK"/>
</dbReference>
<dbReference type="InterPro" id="IPR027417">
    <property type="entry name" value="P-loop_NTPase"/>
</dbReference>
<dbReference type="NCBIfam" id="TIGR00682">
    <property type="entry name" value="lpxK"/>
    <property type="match status" value="1"/>
</dbReference>
<dbReference type="PANTHER" id="PTHR42724">
    <property type="entry name" value="TETRAACYLDISACCHARIDE 4'-KINASE"/>
    <property type="match status" value="1"/>
</dbReference>
<dbReference type="PANTHER" id="PTHR42724:SF1">
    <property type="entry name" value="TETRAACYLDISACCHARIDE 4'-KINASE, MITOCHONDRIAL-RELATED"/>
    <property type="match status" value="1"/>
</dbReference>
<dbReference type="Pfam" id="PF02606">
    <property type="entry name" value="LpxK"/>
    <property type="match status" value="1"/>
</dbReference>
<dbReference type="SUPFAM" id="SSF52540">
    <property type="entry name" value="P-loop containing nucleoside triphosphate hydrolases"/>
    <property type="match status" value="1"/>
</dbReference>
<organism>
    <name type="scientific">Chromobacterium violaceum (strain ATCC 12472 / DSM 30191 / JCM 1249 / CCUG 213 / NBRC 12614 / NCIMB 9131 / NCTC 9757 / MK)</name>
    <dbReference type="NCBI Taxonomy" id="243365"/>
    <lineage>
        <taxon>Bacteria</taxon>
        <taxon>Pseudomonadati</taxon>
        <taxon>Pseudomonadota</taxon>
        <taxon>Betaproteobacteria</taxon>
        <taxon>Neisseriales</taxon>
        <taxon>Chromobacteriaceae</taxon>
        <taxon>Chromobacterium</taxon>
    </lineage>
</organism>
<sequence length="339" mass="35998">MRLIEQHWYRPRGWLTALLAPLEGLFALLAAARRQAFRRGWKTSGRLPVPVVVIGNINVGGVGKTPLTLALLRDFAARGVKVGVISRGYGGKAPAPTEVGPDSDPALVGDEPLLLAAAGAPVVVGRDRVAAGRHLLARHPDVELILSDDGLQHYRLARDLEIVVLDGSRGLGSGRLLPNGPLREPPSRLAAVDAVVVNGEGAQLPLPDGLPRFAMTLRPGACHALDDASRARDAAGFAGRKVAALAGIGHPERFFDTLAGQGIAVEQRLSFPDHHAFVPGDIPADADAVIVTSKDAVKLARVIHDAAQRARLWVLPVQATLAPDLCEWILARLKTKHGR</sequence>
<feature type="chain" id="PRO_0000190922" description="Tetraacyldisaccharide 4'-kinase">
    <location>
        <begin position="1"/>
        <end position="339"/>
    </location>
</feature>
<feature type="binding site" evidence="1">
    <location>
        <begin position="58"/>
        <end position="65"/>
    </location>
    <ligand>
        <name>ATP</name>
        <dbReference type="ChEBI" id="CHEBI:30616"/>
    </ligand>
</feature>
<proteinExistence type="inferred from homology"/>
<gene>
    <name evidence="1" type="primary">lpxK</name>
    <name type="ordered locus">CV_3346</name>
</gene>
<name>LPXK_CHRVO</name>
<accession>Q7NSS4</accession>
<evidence type="ECO:0000255" key="1">
    <source>
        <dbReference type="HAMAP-Rule" id="MF_00409"/>
    </source>
</evidence>
<comment type="function">
    <text evidence="1">Transfers the gamma-phosphate of ATP to the 4'-position of a tetraacyldisaccharide 1-phosphate intermediate (termed DS-1-P) to form tetraacyldisaccharide 1,4'-bis-phosphate (lipid IVA).</text>
</comment>
<comment type="catalytic activity">
    <reaction evidence="1">
        <text>a lipid A disaccharide + ATP = a lipid IVA + ADP + H(+)</text>
        <dbReference type="Rhea" id="RHEA:67840"/>
        <dbReference type="ChEBI" id="CHEBI:15378"/>
        <dbReference type="ChEBI" id="CHEBI:30616"/>
        <dbReference type="ChEBI" id="CHEBI:176343"/>
        <dbReference type="ChEBI" id="CHEBI:176425"/>
        <dbReference type="ChEBI" id="CHEBI:456216"/>
        <dbReference type="EC" id="2.7.1.130"/>
    </reaction>
</comment>
<comment type="pathway">
    <text evidence="1">Glycolipid biosynthesis; lipid IV(A) biosynthesis; lipid IV(A) from (3R)-3-hydroxytetradecanoyl-[acyl-carrier-protein] and UDP-N-acetyl-alpha-D-glucosamine: step 6/6.</text>
</comment>
<comment type="similarity">
    <text evidence="1">Belongs to the LpxK family.</text>
</comment>
<reference key="1">
    <citation type="journal article" date="2003" name="Proc. Natl. Acad. Sci. U.S.A.">
        <title>The complete genome sequence of Chromobacterium violaceum reveals remarkable and exploitable bacterial adaptability.</title>
        <authorList>
            <person name="Vasconcelos A.T.R."/>
            <person name="de Almeida D.F."/>
            <person name="Hungria M."/>
            <person name="Guimaraes C.T."/>
            <person name="Antonio R.V."/>
            <person name="Almeida F.C."/>
            <person name="de Almeida L.G.P."/>
            <person name="de Almeida R."/>
            <person name="Alves-Gomes J.A."/>
            <person name="Andrade E.M."/>
            <person name="Araripe J."/>
            <person name="de Araujo M.F.F."/>
            <person name="Astolfi-Filho S."/>
            <person name="Azevedo V."/>
            <person name="Baptista A.J."/>
            <person name="Bataus L.A.M."/>
            <person name="Batista J.S."/>
            <person name="Belo A."/>
            <person name="van den Berg C."/>
            <person name="Bogo M."/>
            <person name="Bonatto S."/>
            <person name="Bordignon J."/>
            <person name="Brigido M.M."/>
            <person name="Brito C.A."/>
            <person name="Brocchi M."/>
            <person name="Burity H.A."/>
            <person name="Camargo A.A."/>
            <person name="Cardoso D.D.P."/>
            <person name="Carneiro N.P."/>
            <person name="Carraro D.M."/>
            <person name="Carvalho C.M.B."/>
            <person name="Cascardo J.C.M."/>
            <person name="Cavada B.S."/>
            <person name="Chueire L.M.O."/>
            <person name="Creczynski-Pasa T.B."/>
            <person name="Cunha-Junior N.C."/>
            <person name="Fagundes N."/>
            <person name="Falcao C.L."/>
            <person name="Fantinatti F."/>
            <person name="Farias I.P."/>
            <person name="Felipe M.S.S."/>
            <person name="Ferrari L.P."/>
            <person name="Ferro J.A."/>
            <person name="Ferro M.I.T."/>
            <person name="Franco G.R."/>
            <person name="Freitas N.S.A."/>
            <person name="Furlan L.R."/>
            <person name="Gazzinelli R.T."/>
            <person name="Gomes E.A."/>
            <person name="Goncalves P.R."/>
            <person name="Grangeiro T.B."/>
            <person name="Grattapaglia D."/>
            <person name="Grisard E.C."/>
            <person name="Hanna E.S."/>
            <person name="Jardim S.N."/>
            <person name="Laurino J."/>
            <person name="Leoi L.C.T."/>
            <person name="Lima L.F.A."/>
            <person name="Loureiro M.F."/>
            <person name="Lyra M.C.C.P."/>
            <person name="Madeira H.M.F."/>
            <person name="Manfio G.P."/>
            <person name="Maranhao A.Q."/>
            <person name="Martins W.S."/>
            <person name="di Mauro S.M.Z."/>
            <person name="de Medeiros S.R.B."/>
            <person name="Meissner R.V."/>
            <person name="Moreira M.A.M."/>
            <person name="Nascimento F.F."/>
            <person name="Nicolas M.F."/>
            <person name="Oliveira J.G."/>
            <person name="Oliveira S.C."/>
            <person name="Paixao R.F.C."/>
            <person name="Parente J.A."/>
            <person name="Pedrosa F.O."/>
            <person name="Pena S.D.J."/>
            <person name="Pereira J.O."/>
            <person name="Pereira M."/>
            <person name="Pinto L.S.R.C."/>
            <person name="Pinto L.S."/>
            <person name="Porto J.I.R."/>
            <person name="Potrich D.P."/>
            <person name="Ramalho-Neto C.E."/>
            <person name="Reis A.M.M."/>
            <person name="Rigo L.U."/>
            <person name="Rondinelli E."/>
            <person name="Santos E.B.P."/>
            <person name="Santos F.R."/>
            <person name="Schneider M.P.C."/>
            <person name="Seuanez H.N."/>
            <person name="Silva A.M.R."/>
            <person name="da Silva A.L.C."/>
            <person name="Silva D.W."/>
            <person name="Silva R."/>
            <person name="Simoes I.C."/>
            <person name="Simon D."/>
            <person name="Soares C.M.A."/>
            <person name="Soares R.B.A."/>
            <person name="Souza E.M."/>
            <person name="Souza K.R.L."/>
            <person name="Souza R.C."/>
            <person name="Steffens M.B.R."/>
            <person name="Steindel M."/>
            <person name="Teixeira S.R."/>
            <person name="Urmenyi T."/>
            <person name="Vettore A."/>
            <person name="Wassem R."/>
            <person name="Zaha A."/>
            <person name="Simpson A.J.G."/>
        </authorList>
    </citation>
    <scope>NUCLEOTIDE SEQUENCE [LARGE SCALE GENOMIC DNA]</scope>
    <source>
        <strain>ATCC 12472 / DSM 30191 / JCM 1249 / CCUG 213 / NBRC 12614 / NCIMB 9131 / NCTC 9757 / MK</strain>
    </source>
</reference>
<keyword id="KW-0067">ATP-binding</keyword>
<keyword id="KW-0418">Kinase</keyword>
<keyword id="KW-0441">Lipid A biosynthesis</keyword>
<keyword id="KW-0444">Lipid biosynthesis</keyword>
<keyword id="KW-0443">Lipid metabolism</keyword>
<keyword id="KW-0547">Nucleotide-binding</keyword>
<keyword id="KW-1185">Reference proteome</keyword>
<keyword id="KW-0808">Transferase</keyword>
<protein>
    <recommendedName>
        <fullName evidence="1">Tetraacyldisaccharide 4'-kinase</fullName>
        <ecNumber evidence="1">2.7.1.130</ecNumber>
    </recommendedName>
    <alternativeName>
        <fullName evidence="1">Lipid A 4'-kinase</fullName>
    </alternativeName>
</protein>